<accession>P33083</accession>
<feature type="chain" id="PRO_0000064779" description="Auxin-induced protein 6B">
    <location>
        <begin position="1"/>
        <end position="90"/>
    </location>
</feature>
<name>AX6B_SOYBN</name>
<dbReference type="EMBL" id="S44175">
    <property type="protein sequence ID" value="AAB23281.1"/>
    <property type="molecule type" value="Genomic_DNA"/>
</dbReference>
<dbReference type="PIR" id="JQ1098">
    <property type="entry name" value="JQ1098"/>
</dbReference>
<dbReference type="RefSeq" id="XP_025983451.1">
    <property type="nucleotide sequence ID" value="XM_026127666.2"/>
</dbReference>
<dbReference type="RefSeq" id="XP_025984788.1">
    <property type="nucleotide sequence ID" value="XM_026129003.2"/>
</dbReference>
<dbReference type="RefSeq" id="XP_025984790.1">
    <property type="nucleotide sequence ID" value="XM_026129005.2"/>
</dbReference>
<dbReference type="FunCoup" id="P33083">
    <property type="interactions" value="603"/>
</dbReference>
<dbReference type="STRING" id="3847.P33083"/>
<dbReference type="PaxDb" id="3847-GLYMA0079S00360.1"/>
<dbReference type="EnsemblPlants" id="KRG88477">
    <property type="protein sequence ID" value="KRG88477"/>
    <property type="gene ID" value="GLYMA_U036200"/>
</dbReference>
<dbReference type="EnsemblPlants" id="KRH55788">
    <property type="protein sequence ID" value="KRH55788"/>
    <property type="gene ID" value="GLYMA_06G281800"/>
</dbReference>
<dbReference type="EnsemblPlants" id="KRH55790">
    <property type="protein sequence ID" value="KRH55790"/>
    <property type="gene ID" value="GLYMA_06G282000"/>
</dbReference>
<dbReference type="EnsemblPlants" id="KRH55797">
    <property type="protein sequence ID" value="KRH55797"/>
    <property type="gene ID" value="GLYMA_06G282700"/>
</dbReference>
<dbReference type="GeneID" id="113001050"/>
<dbReference type="GeneID" id="113001959"/>
<dbReference type="GeneID" id="113001961"/>
<dbReference type="Gramene" id="KRG88477">
    <property type="protein sequence ID" value="KRG88477"/>
    <property type="gene ID" value="GLYMA_U036200"/>
</dbReference>
<dbReference type="Gramene" id="KRH55788">
    <property type="protein sequence ID" value="KRH55788"/>
    <property type="gene ID" value="GLYMA_06G281800"/>
</dbReference>
<dbReference type="Gramene" id="KRH55790">
    <property type="protein sequence ID" value="KRH55790"/>
    <property type="gene ID" value="GLYMA_06G282000"/>
</dbReference>
<dbReference type="Gramene" id="KRH55797">
    <property type="protein sequence ID" value="KRH55797"/>
    <property type="gene ID" value="GLYMA_06G282700"/>
</dbReference>
<dbReference type="eggNOG" id="ENOG502S4NX">
    <property type="taxonomic scope" value="Eukaryota"/>
</dbReference>
<dbReference type="HOGENOM" id="CLU_098106_3_1_1"/>
<dbReference type="InParanoid" id="P33083"/>
<dbReference type="OrthoDB" id="625231at2759"/>
<dbReference type="Proteomes" id="UP000008827">
    <property type="component" value="Chromosome 6"/>
</dbReference>
<dbReference type="Proteomes" id="UP000008827">
    <property type="component" value="Unassembled WGS sequence"/>
</dbReference>
<dbReference type="GO" id="GO:0009734">
    <property type="term" value="P:auxin-activated signaling pathway"/>
    <property type="evidence" value="ECO:0007669"/>
    <property type="project" value="UniProtKB-KW"/>
</dbReference>
<dbReference type="InterPro" id="IPR003676">
    <property type="entry name" value="SAUR_fam"/>
</dbReference>
<dbReference type="PANTHER" id="PTHR31929">
    <property type="entry name" value="SAUR-LIKE AUXIN-RESPONSIVE PROTEIN FAMILY-RELATED"/>
    <property type="match status" value="1"/>
</dbReference>
<dbReference type="Pfam" id="PF02519">
    <property type="entry name" value="Auxin_inducible"/>
    <property type="match status" value="1"/>
</dbReference>
<evidence type="ECO:0000305" key="1"/>
<comment type="induction">
    <text>By auxin.</text>
</comment>
<comment type="similarity">
    <text evidence="1">Belongs to the ARG7 family.</text>
</comment>
<sequence length="90" mass="10068">MGFRLPGIRKASFSANQASSKAVDVEKGYLAVYVGEKMRRFVIPVSYLNKPSFQDLLSQAEEEFGYHHPNGGLTIPCSEDVFQHITSFLN</sequence>
<reference key="1">
    <citation type="journal article" date="1989" name="Plant Cell">
        <title>Transcription, organization, and sequence of an auxin-regulated gene cluster in soybean.</title>
        <authorList>
            <person name="McClure B.A."/>
            <person name="Hagen G."/>
            <person name="Brown C.S."/>
            <person name="Gee M.A."/>
            <person name="Guilfoyle T.J."/>
        </authorList>
    </citation>
    <scope>NUCLEOTIDE SEQUENCE [GENOMIC DNA]</scope>
    <source>
        <strain>cv. Wayne</strain>
    </source>
</reference>
<keyword id="KW-0927">Auxin signaling pathway</keyword>
<keyword id="KW-1185">Reference proteome</keyword>
<organism>
    <name type="scientific">Glycine max</name>
    <name type="common">Soybean</name>
    <name type="synonym">Glycine hispida</name>
    <dbReference type="NCBI Taxonomy" id="3847"/>
    <lineage>
        <taxon>Eukaryota</taxon>
        <taxon>Viridiplantae</taxon>
        <taxon>Streptophyta</taxon>
        <taxon>Embryophyta</taxon>
        <taxon>Tracheophyta</taxon>
        <taxon>Spermatophyta</taxon>
        <taxon>Magnoliopsida</taxon>
        <taxon>eudicotyledons</taxon>
        <taxon>Gunneridae</taxon>
        <taxon>Pentapetalae</taxon>
        <taxon>rosids</taxon>
        <taxon>fabids</taxon>
        <taxon>Fabales</taxon>
        <taxon>Fabaceae</taxon>
        <taxon>Papilionoideae</taxon>
        <taxon>50 kb inversion clade</taxon>
        <taxon>NPAAA clade</taxon>
        <taxon>indigoferoid/millettioid clade</taxon>
        <taxon>Phaseoleae</taxon>
        <taxon>Glycine</taxon>
        <taxon>Glycine subgen. Soja</taxon>
    </lineage>
</organism>
<proteinExistence type="evidence at transcript level"/>
<protein>
    <recommendedName>
        <fullName>Auxin-induced protein 6B</fullName>
    </recommendedName>
</protein>